<organism>
    <name type="scientific">Microtus xanthognathus</name>
    <name type="common">Yellow-cheeked vole</name>
    <name type="synonym">Taiga vole</name>
    <dbReference type="NCBI Taxonomy" id="10054"/>
    <lineage>
        <taxon>Eukaryota</taxon>
        <taxon>Metazoa</taxon>
        <taxon>Chordata</taxon>
        <taxon>Craniata</taxon>
        <taxon>Vertebrata</taxon>
        <taxon>Euteleostomi</taxon>
        <taxon>Mammalia</taxon>
        <taxon>Eutheria</taxon>
        <taxon>Euarchontoglires</taxon>
        <taxon>Glires</taxon>
        <taxon>Rodentia</taxon>
        <taxon>Myomorpha</taxon>
        <taxon>Muroidea</taxon>
        <taxon>Cricetidae</taxon>
        <taxon>Arvicolinae</taxon>
        <taxon>Microtus</taxon>
    </lineage>
</organism>
<sequence>VHLTDAEKAAISGLWGKVBABAAGAZALGRLLVVYPWTZRFFZHFGBLSSASAVMGNAQVKAHGKKVIHAFADGLKHLDBLKGTFASLSZLHCBKLHVBPZBFRLLGBMIVIVLAHHLGKDFTPSAZAAFZKVVAGVASALAHKYH</sequence>
<accession>P02092</accession>
<feature type="chain" id="PRO_0000053021" description="Hemoglobin subunit beta">
    <location>
        <begin position="1"/>
        <end position="146"/>
    </location>
</feature>
<feature type="domain" description="Globin" evidence="3">
    <location>
        <begin position="2"/>
        <end position="146"/>
    </location>
</feature>
<feature type="binding site" description="distal binding residue" evidence="3">
    <location>
        <position position="63"/>
    </location>
    <ligand>
        <name>heme b</name>
        <dbReference type="ChEBI" id="CHEBI:60344"/>
    </ligand>
    <ligandPart>
        <name>Fe</name>
        <dbReference type="ChEBI" id="CHEBI:18248"/>
    </ligandPart>
</feature>
<feature type="binding site" description="proximal binding residue" evidence="3">
    <location>
        <position position="92"/>
    </location>
    <ligand>
        <name>heme b</name>
        <dbReference type="ChEBI" id="CHEBI:60344"/>
    </ligand>
    <ligandPart>
        <name>Fe</name>
        <dbReference type="ChEBI" id="CHEBI:18248"/>
    </ligandPart>
</feature>
<feature type="modified residue" description="N-acetylvaline" evidence="1">
    <location>
        <position position="1"/>
    </location>
</feature>
<feature type="modified residue" description="N6-acetyllysine" evidence="2">
    <location>
        <position position="82"/>
    </location>
</feature>
<feature type="modified residue" description="S-nitrosocysteine" evidence="2">
    <location>
        <position position="93"/>
    </location>
</feature>
<feature type="modified residue" description="N6-acetyllysine" evidence="2">
    <location>
        <position position="144"/>
    </location>
</feature>
<name>HBB_MICXA</name>
<proteinExistence type="evidence at protein level"/>
<gene>
    <name type="primary">HBB</name>
</gene>
<comment type="function">
    <text>Involved in oxygen transport from the lung to the various peripheral tissues.</text>
</comment>
<comment type="subunit">
    <text>Heterotetramer of two alpha chains and two beta chains.</text>
</comment>
<comment type="tissue specificity">
    <text>Red blood cells.</text>
</comment>
<comment type="similarity">
    <text evidence="3">Belongs to the globin family.</text>
</comment>
<protein>
    <recommendedName>
        <fullName>Hemoglobin subunit beta</fullName>
    </recommendedName>
    <alternativeName>
        <fullName>Beta-globin</fullName>
    </alternativeName>
    <alternativeName>
        <fullName>Hemoglobin beta chain</fullName>
    </alternativeName>
</protein>
<dbReference type="PIR" id="A02408">
    <property type="entry name" value="HBVOY"/>
</dbReference>
<dbReference type="GO" id="GO:0072562">
    <property type="term" value="C:blood microparticle"/>
    <property type="evidence" value="ECO:0007669"/>
    <property type="project" value="TreeGrafter"/>
</dbReference>
<dbReference type="GO" id="GO:0031838">
    <property type="term" value="C:haptoglobin-hemoglobin complex"/>
    <property type="evidence" value="ECO:0007669"/>
    <property type="project" value="TreeGrafter"/>
</dbReference>
<dbReference type="GO" id="GO:0005833">
    <property type="term" value="C:hemoglobin complex"/>
    <property type="evidence" value="ECO:0007669"/>
    <property type="project" value="InterPro"/>
</dbReference>
<dbReference type="GO" id="GO:0031720">
    <property type="term" value="F:haptoglobin binding"/>
    <property type="evidence" value="ECO:0007669"/>
    <property type="project" value="TreeGrafter"/>
</dbReference>
<dbReference type="GO" id="GO:0020037">
    <property type="term" value="F:heme binding"/>
    <property type="evidence" value="ECO:0007669"/>
    <property type="project" value="InterPro"/>
</dbReference>
<dbReference type="GO" id="GO:0031721">
    <property type="term" value="F:hemoglobin alpha binding"/>
    <property type="evidence" value="ECO:0007669"/>
    <property type="project" value="TreeGrafter"/>
</dbReference>
<dbReference type="GO" id="GO:0046872">
    <property type="term" value="F:metal ion binding"/>
    <property type="evidence" value="ECO:0007669"/>
    <property type="project" value="UniProtKB-KW"/>
</dbReference>
<dbReference type="GO" id="GO:0043177">
    <property type="term" value="F:organic acid binding"/>
    <property type="evidence" value="ECO:0007669"/>
    <property type="project" value="TreeGrafter"/>
</dbReference>
<dbReference type="GO" id="GO:0019825">
    <property type="term" value="F:oxygen binding"/>
    <property type="evidence" value="ECO:0007669"/>
    <property type="project" value="InterPro"/>
</dbReference>
<dbReference type="GO" id="GO:0005344">
    <property type="term" value="F:oxygen carrier activity"/>
    <property type="evidence" value="ECO:0007669"/>
    <property type="project" value="UniProtKB-KW"/>
</dbReference>
<dbReference type="GO" id="GO:0004601">
    <property type="term" value="F:peroxidase activity"/>
    <property type="evidence" value="ECO:0007669"/>
    <property type="project" value="TreeGrafter"/>
</dbReference>
<dbReference type="GO" id="GO:0042744">
    <property type="term" value="P:hydrogen peroxide catabolic process"/>
    <property type="evidence" value="ECO:0007669"/>
    <property type="project" value="TreeGrafter"/>
</dbReference>
<dbReference type="CDD" id="cd08925">
    <property type="entry name" value="Hb-beta-like"/>
    <property type="match status" value="1"/>
</dbReference>
<dbReference type="FunFam" id="1.10.490.10:FF:000001">
    <property type="entry name" value="Hemoglobin subunit beta"/>
    <property type="match status" value="1"/>
</dbReference>
<dbReference type="Gene3D" id="1.10.490.10">
    <property type="entry name" value="Globins"/>
    <property type="match status" value="1"/>
</dbReference>
<dbReference type="InterPro" id="IPR000971">
    <property type="entry name" value="Globin"/>
</dbReference>
<dbReference type="InterPro" id="IPR009050">
    <property type="entry name" value="Globin-like_sf"/>
</dbReference>
<dbReference type="InterPro" id="IPR012292">
    <property type="entry name" value="Globin/Proto"/>
</dbReference>
<dbReference type="InterPro" id="IPR002337">
    <property type="entry name" value="Hemoglobin_b"/>
</dbReference>
<dbReference type="InterPro" id="IPR050056">
    <property type="entry name" value="Hemoglobin_oxygen_transport"/>
</dbReference>
<dbReference type="PANTHER" id="PTHR11442">
    <property type="entry name" value="HEMOGLOBIN FAMILY MEMBER"/>
    <property type="match status" value="1"/>
</dbReference>
<dbReference type="PANTHER" id="PTHR11442:SF42">
    <property type="entry name" value="HEMOGLOBIN SUBUNIT BETA"/>
    <property type="match status" value="1"/>
</dbReference>
<dbReference type="Pfam" id="PF00042">
    <property type="entry name" value="Globin"/>
    <property type="match status" value="1"/>
</dbReference>
<dbReference type="PRINTS" id="PR00814">
    <property type="entry name" value="BETAHAEM"/>
</dbReference>
<dbReference type="SUPFAM" id="SSF46458">
    <property type="entry name" value="Globin-like"/>
    <property type="match status" value="1"/>
</dbReference>
<dbReference type="PROSITE" id="PS01033">
    <property type="entry name" value="GLOBIN"/>
    <property type="match status" value="1"/>
</dbReference>
<evidence type="ECO:0000250" key="1">
    <source>
        <dbReference type="UniProtKB" id="P02086"/>
    </source>
</evidence>
<evidence type="ECO:0000250" key="2">
    <source>
        <dbReference type="UniProtKB" id="P68871"/>
    </source>
</evidence>
<evidence type="ECO:0000255" key="3">
    <source>
        <dbReference type="PROSITE-ProRule" id="PRU00238"/>
    </source>
</evidence>
<keyword id="KW-0007">Acetylation</keyword>
<keyword id="KW-0903">Direct protein sequencing</keyword>
<keyword id="KW-0349">Heme</keyword>
<keyword id="KW-0408">Iron</keyword>
<keyword id="KW-0479">Metal-binding</keyword>
<keyword id="KW-0561">Oxygen transport</keyword>
<keyword id="KW-0702">S-nitrosylation</keyword>
<keyword id="KW-0813">Transport</keyword>
<reference key="1">
    <citation type="journal article" date="1977" name="Comp. Biochem. Physiol.">
        <title>The primary structure of the hemoglobin beta-chain of Microtus xanthognathus.</title>
        <authorList>
            <person name="Duffy L.K."/>
            <person name="Genaux C.T."/>
        </authorList>
    </citation>
    <scope>PROTEIN SEQUENCE</scope>
</reference>